<name>YCF24_GALSU</name>
<dbReference type="EMBL" id="X67814">
    <property type="protein sequence ID" value="CAA48016.1"/>
    <property type="molecule type" value="Genomic_DNA"/>
</dbReference>
<dbReference type="SMR" id="P35912"/>
<dbReference type="eggNOG" id="ENOG502QRGW">
    <property type="taxonomic scope" value="Eukaryota"/>
</dbReference>
<dbReference type="GO" id="GO:0009507">
    <property type="term" value="C:chloroplast"/>
    <property type="evidence" value="ECO:0007669"/>
    <property type="project" value="UniProtKB-SubCell"/>
</dbReference>
<dbReference type="GO" id="GO:0016226">
    <property type="term" value="P:iron-sulfur cluster assembly"/>
    <property type="evidence" value="ECO:0007669"/>
    <property type="project" value="InterPro"/>
</dbReference>
<dbReference type="InterPro" id="IPR055346">
    <property type="entry name" value="Fe-S_cluster_assembly_SufBD"/>
</dbReference>
<dbReference type="InterPro" id="IPR000825">
    <property type="entry name" value="SUF_FeS_clus_asmbl_SufBD_core"/>
</dbReference>
<dbReference type="InterPro" id="IPR037284">
    <property type="entry name" value="SUF_FeS_clus_asmbl_SufBD_sf"/>
</dbReference>
<dbReference type="PANTHER" id="PTHR30508">
    <property type="entry name" value="FES CLUSTER ASSEMBLY PROTEIN SUF"/>
    <property type="match status" value="1"/>
</dbReference>
<dbReference type="PANTHER" id="PTHR30508:SF1">
    <property type="entry name" value="UPF0051 PROTEIN ABCI8, CHLOROPLASTIC-RELATED"/>
    <property type="match status" value="1"/>
</dbReference>
<dbReference type="Pfam" id="PF01458">
    <property type="entry name" value="SUFBD_core"/>
    <property type="match status" value="1"/>
</dbReference>
<dbReference type="SUPFAM" id="SSF101960">
    <property type="entry name" value="Stabilizer of iron transporter SufD"/>
    <property type="match status" value="1"/>
</dbReference>
<geneLocation type="chloroplast"/>
<comment type="subcellular location">
    <subcellularLocation>
        <location>Plastid</location>
        <location>Chloroplast</location>
    </subcellularLocation>
</comment>
<comment type="similarity">
    <text evidence="1">Belongs to the iron-sulfur cluster assembly SufBD family.</text>
</comment>
<reference key="1">
    <citation type="journal article" date="1993" name="Plant Mol. Biol.">
        <title>Organization of plastid-encoded ATPase genes and flanking regions including homologues of infB and tsf in the thermophilic red alga Galdieria sulphuraria.</title>
        <authorList>
            <person name="Kostrzewa M."/>
            <person name="Zetsche K."/>
        </authorList>
    </citation>
    <scope>NUCLEOTIDE SEQUENCE [GENOMIC DNA]</scope>
    <source>
        <strain>14-1-1 / Isolate 107.79/Goettingen</strain>
    </source>
</reference>
<sequence>NSEVKYSTVQNWYSGDENGKGGIYNFVTKRGLCAESNSKISWTQVETGSAITWKYPSCILAGNNSKGEFYSVALTNHYQQADTGSKMIHIGKNSRSKIISKGISTGNSINSYRGKVKVSLNASRARNYSQCDSLLIGNSSEANTFPYIEVYNRSSIIEHEASISKINEEKLFYFMQRGISIEEAISLIVSGFCKEVFTELPLEFALEADKLLGLKLEGSVG</sequence>
<feature type="chain" id="PRO_0000147390" description="Iron-sulfur cluster assembly SufBD family protein ycf24">
    <location>
        <begin position="1" status="less than"/>
        <end position="221"/>
    </location>
</feature>
<feature type="non-terminal residue">
    <location>
        <position position="1"/>
    </location>
</feature>
<protein>
    <recommendedName>
        <fullName>Iron-sulfur cluster assembly SufBD family protein ycf24</fullName>
    </recommendedName>
    <alternativeName>
        <fullName>ORF X</fullName>
    </alternativeName>
</protein>
<proteinExistence type="inferred from homology"/>
<accession>P35912</accession>
<keyword id="KW-0150">Chloroplast</keyword>
<keyword id="KW-0934">Plastid</keyword>
<organism>
    <name type="scientific">Galdieria sulphuraria</name>
    <name type="common">Red alga</name>
    <dbReference type="NCBI Taxonomy" id="130081"/>
    <lineage>
        <taxon>Eukaryota</taxon>
        <taxon>Rhodophyta</taxon>
        <taxon>Bangiophyceae</taxon>
        <taxon>Galdieriales</taxon>
        <taxon>Galdieriaceae</taxon>
        <taxon>Galdieria</taxon>
    </lineage>
</organism>
<evidence type="ECO:0000305" key="1"/>
<gene>
    <name type="primary">ycf24</name>
</gene>